<reference evidence="8" key="1">
    <citation type="journal article" date="2000" name="Science">
        <title>The genome sequence of Drosophila melanogaster.</title>
        <authorList>
            <person name="Adams M.D."/>
            <person name="Celniker S.E."/>
            <person name="Holt R.A."/>
            <person name="Evans C.A."/>
            <person name="Gocayne J.D."/>
            <person name="Amanatides P.G."/>
            <person name="Scherer S.E."/>
            <person name="Li P.W."/>
            <person name="Hoskins R.A."/>
            <person name="Galle R.F."/>
            <person name="George R.A."/>
            <person name="Lewis S.E."/>
            <person name="Richards S."/>
            <person name="Ashburner M."/>
            <person name="Henderson S.N."/>
            <person name="Sutton G.G."/>
            <person name="Wortman J.R."/>
            <person name="Yandell M.D."/>
            <person name="Zhang Q."/>
            <person name="Chen L.X."/>
            <person name="Brandon R.C."/>
            <person name="Rogers Y.-H.C."/>
            <person name="Blazej R.G."/>
            <person name="Champe M."/>
            <person name="Pfeiffer B.D."/>
            <person name="Wan K.H."/>
            <person name="Doyle C."/>
            <person name="Baxter E.G."/>
            <person name="Helt G."/>
            <person name="Nelson C.R."/>
            <person name="Miklos G.L.G."/>
            <person name="Abril J.F."/>
            <person name="Agbayani A."/>
            <person name="An H.-J."/>
            <person name="Andrews-Pfannkoch C."/>
            <person name="Baldwin D."/>
            <person name="Ballew R.M."/>
            <person name="Basu A."/>
            <person name="Baxendale J."/>
            <person name="Bayraktaroglu L."/>
            <person name="Beasley E.M."/>
            <person name="Beeson K.Y."/>
            <person name="Benos P.V."/>
            <person name="Berman B.P."/>
            <person name="Bhandari D."/>
            <person name="Bolshakov S."/>
            <person name="Borkova D."/>
            <person name="Botchan M.R."/>
            <person name="Bouck J."/>
            <person name="Brokstein P."/>
            <person name="Brottier P."/>
            <person name="Burtis K.C."/>
            <person name="Busam D.A."/>
            <person name="Butler H."/>
            <person name="Cadieu E."/>
            <person name="Center A."/>
            <person name="Chandra I."/>
            <person name="Cherry J.M."/>
            <person name="Cawley S."/>
            <person name="Dahlke C."/>
            <person name="Davenport L.B."/>
            <person name="Davies P."/>
            <person name="de Pablos B."/>
            <person name="Delcher A."/>
            <person name="Deng Z."/>
            <person name="Mays A.D."/>
            <person name="Dew I."/>
            <person name="Dietz S.M."/>
            <person name="Dodson K."/>
            <person name="Doup L.E."/>
            <person name="Downes M."/>
            <person name="Dugan-Rocha S."/>
            <person name="Dunkov B.C."/>
            <person name="Dunn P."/>
            <person name="Durbin K.J."/>
            <person name="Evangelista C.C."/>
            <person name="Ferraz C."/>
            <person name="Ferriera S."/>
            <person name="Fleischmann W."/>
            <person name="Fosler C."/>
            <person name="Gabrielian A.E."/>
            <person name="Garg N.S."/>
            <person name="Gelbart W.M."/>
            <person name="Glasser K."/>
            <person name="Glodek A."/>
            <person name="Gong F."/>
            <person name="Gorrell J.H."/>
            <person name="Gu Z."/>
            <person name="Guan P."/>
            <person name="Harris M."/>
            <person name="Harris N.L."/>
            <person name="Harvey D.A."/>
            <person name="Heiman T.J."/>
            <person name="Hernandez J.R."/>
            <person name="Houck J."/>
            <person name="Hostin D."/>
            <person name="Houston K.A."/>
            <person name="Howland T.J."/>
            <person name="Wei M.-H."/>
            <person name="Ibegwam C."/>
            <person name="Jalali M."/>
            <person name="Kalush F."/>
            <person name="Karpen G.H."/>
            <person name="Ke Z."/>
            <person name="Kennison J.A."/>
            <person name="Ketchum K.A."/>
            <person name="Kimmel B.E."/>
            <person name="Kodira C.D."/>
            <person name="Kraft C.L."/>
            <person name="Kravitz S."/>
            <person name="Kulp D."/>
            <person name="Lai Z."/>
            <person name="Lasko P."/>
            <person name="Lei Y."/>
            <person name="Levitsky A.A."/>
            <person name="Li J.H."/>
            <person name="Li Z."/>
            <person name="Liang Y."/>
            <person name="Lin X."/>
            <person name="Liu X."/>
            <person name="Mattei B."/>
            <person name="McIntosh T.C."/>
            <person name="McLeod M.P."/>
            <person name="McPherson D."/>
            <person name="Merkulov G."/>
            <person name="Milshina N.V."/>
            <person name="Mobarry C."/>
            <person name="Morris J."/>
            <person name="Moshrefi A."/>
            <person name="Mount S.M."/>
            <person name="Moy M."/>
            <person name="Murphy B."/>
            <person name="Murphy L."/>
            <person name="Muzny D.M."/>
            <person name="Nelson D.L."/>
            <person name="Nelson D.R."/>
            <person name="Nelson K.A."/>
            <person name="Nixon K."/>
            <person name="Nusskern D.R."/>
            <person name="Pacleb J.M."/>
            <person name="Palazzolo M."/>
            <person name="Pittman G.S."/>
            <person name="Pan S."/>
            <person name="Pollard J."/>
            <person name="Puri V."/>
            <person name="Reese M.G."/>
            <person name="Reinert K."/>
            <person name="Remington K."/>
            <person name="Saunders R.D.C."/>
            <person name="Scheeler F."/>
            <person name="Shen H."/>
            <person name="Shue B.C."/>
            <person name="Siden-Kiamos I."/>
            <person name="Simpson M."/>
            <person name="Skupski M.P."/>
            <person name="Smith T.J."/>
            <person name="Spier E."/>
            <person name="Spradling A.C."/>
            <person name="Stapleton M."/>
            <person name="Strong R."/>
            <person name="Sun E."/>
            <person name="Svirskas R."/>
            <person name="Tector C."/>
            <person name="Turner R."/>
            <person name="Venter E."/>
            <person name="Wang A.H."/>
            <person name="Wang X."/>
            <person name="Wang Z.-Y."/>
            <person name="Wassarman D.A."/>
            <person name="Weinstock G.M."/>
            <person name="Weissenbach J."/>
            <person name="Williams S.M."/>
            <person name="Woodage T."/>
            <person name="Worley K.C."/>
            <person name="Wu D."/>
            <person name="Yang S."/>
            <person name="Yao Q.A."/>
            <person name="Ye J."/>
            <person name="Yeh R.-F."/>
            <person name="Zaveri J.S."/>
            <person name="Zhan M."/>
            <person name="Zhang G."/>
            <person name="Zhao Q."/>
            <person name="Zheng L."/>
            <person name="Zheng X.H."/>
            <person name="Zhong F.N."/>
            <person name="Zhong W."/>
            <person name="Zhou X."/>
            <person name="Zhu S.C."/>
            <person name="Zhu X."/>
            <person name="Smith H.O."/>
            <person name="Gibbs R.A."/>
            <person name="Myers E.W."/>
            <person name="Rubin G.M."/>
            <person name="Venter J.C."/>
        </authorList>
    </citation>
    <scope>NUCLEOTIDE SEQUENCE [LARGE SCALE GENOMIC DNA]</scope>
    <source>
        <strain evidence="8">Berkeley</strain>
    </source>
</reference>
<reference evidence="8" key="2">
    <citation type="journal article" date="2002" name="Genome Biol.">
        <title>Annotation of the Drosophila melanogaster euchromatic genome: a systematic review.</title>
        <authorList>
            <person name="Misra S."/>
            <person name="Crosby M.A."/>
            <person name="Mungall C.J."/>
            <person name="Matthews B.B."/>
            <person name="Campbell K.S."/>
            <person name="Hradecky P."/>
            <person name="Huang Y."/>
            <person name="Kaminker J.S."/>
            <person name="Millburn G.H."/>
            <person name="Prochnik S.E."/>
            <person name="Smith C.D."/>
            <person name="Tupy J.L."/>
            <person name="Whitfield E.J."/>
            <person name="Bayraktaroglu L."/>
            <person name="Berman B.P."/>
            <person name="Bettencourt B.R."/>
            <person name="Celniker S.E."/>
            <person name="de Grey A.D.N.J."/>
            <person name="Drysdale R.A."/>
            <person name="Harris N.L."/>
            <person name="Richter J."/>
            <person name="Russo S."/>
            <person name="Schroeder A.J."/>
            <person name="Shu S.Q."/>
            <person name="Stapleton M."/>
            <person name="Yamada C."/>
            <person name="Ashburner M."/>
            <person name="Gelbart W.M."/>
            <person name="Rubin G.M."/>
            <person name="Lewis S.E."/>
        </authorList>
    </citation>
    <scope>GENOME REANNOTATION</scope>
    <source>
        <strain evidence="8">Berkeley</strain>
    </source>
</reference>
<reference evidence="5" key="3">
    <citation type="journal article" date="2002" name="Genome Biol.">
        <title>A Drosophila full-length cDNA resource.</title>
        <authorList>
            <person name="Stapleton M."/>
            <person name="Carlson J.W."/>
            <person name="Brokstein P."/>
            <person name="Yu C."/>
            <person name="Champe M."/>
            <person name="George R.A."/>
            <person name="Guarin H."/>
            <person name="Kronmiller B."/>
            <person name="Pacleb J.M."/>
            <person name="Park S."/>
            <person name="Wan K.H."/>
            <person name="Rubin G.M."/>
            <person name="Celniker S.E."/>
        </authorList>
    </citation>
    <scope>NUCLEOTIDE SEQUENCE [LARGE SCALE MRNA] (ISOFORM B)</scope>
    <source>
        <strain evidence="5">Berkeley</strain>
        <tissue evidence="5">Testis</tissue>
    </source>
</reference>
<reference evidence="6" key="4">
    <citation type="submission" date="2011-03" db="EMBL/GenBank/DDBJ databases">
        <authorList>
            <person name="Carlson J."/>
            <person name="Booth B."/>
            <person name="Frise E."/>
            <person name="Park S."/>
            <person name="Wan K."/>
            <person name="Yu C."/>
            <person name="Celniker S."/>
        </authorList>
    </citation>
    <scope>NUCLEOTIDE SEQUENCE [LARGE SCALE MRNA] (ISOFORM C)</scope>
    <source>
        <strain evidence="6">Berkeley</strain>
        <tissue evidence="6">Testis</tissue>
    </source>
</reference>
<reference evidence="4" key="5">
    <citation type="journal article" date="2015" name="Cell Rep.">
        <title>Prtl99C Acts Together with Protamines and Safeguards Male Fertility in Drosophila.</title>
        <authorList>
            <person name="Eren-Ghiani Z."/>
            <person name="Rathke C."/>
            <person name="Theofel I."/>
            <person name="Renkawitz-Pohl R."/>
        </authorList>
    </citation>
    <scope>FUNCTION</scope>
    <scope>SUBCELLULAR LOCATION</scope>
    <scope>DEVELOPMENTAL STAGE</scope>
    <scope>DOMAIN</scope>
    <scope>DISRUPTION PHENOTYPE</scope>
</reference>
<proteinExistence type="evidence at transcript level"/>
<protein>
    <recommendedName>
        <fullName evidence="3">Protamine-like protein 99C</fullName>
    </recommendedName>
</protein>
<name>PR99C_DROME</name>
<sequence>MGRKRGRKEYCPPIYKRQKVARVTNNGYLNFMTEYKKRFYGLSPQDMVHYAAKQWTQLSMAEKEAFKSKKPSTITLKSPAQYVACEMKSDVAGGQQSSCQRQSPSARLRESERRSSRSKTLCRSAKNRQRGKPKPQQSKRRLSHMGSAVAYIHFLRKFQRKNTELRTIDLLKTATRLWCRLPERHRHAFERPLWIVTIGKS</sequence>
<gene>
    <name evidence="3 7" type="primary">Prtl99C</name>
    <name evidence="7" type="ORF">CG15510</name>
</gene>
<accession>Q9VAF7</accession>
<accession>E1JJ16</accession>
<accession>F2FB58</accession>
<accession>Q8MZC5</accession>
<evidence type="ECO:0000256" key="1">
    <source>
        <dbReference type="SAM" id="MobiDB-lite"/>
    </source>
</evidence>
<evidence type="ECO:0000269" key="2">
    <source>
    </source>
</evidence>
<evidence type="ECO:0000303" key="3">
    <source>
    </source>
</evidence>
<evidence type="ECO:0000305" key="4"/>
<evidence type="ECO:0000312" key="5">
    <source>
        <dbReference type="EMBL" id="AAM29258.1"/>
    </source>
</evidence>
<evidence type="ECO:0000312" key="6">
    <source>
        <dbReference type="EMBL" id="ADZ74172.1"/>
    </source>
</evidence>
<evidence type="ECO:0000312" key="7">
    <source>
        <dbReference type="FlyBase" id="FBgn0039707"/>
    </source>
</evidence>
<evidence type="ECO:0000312" key="8">
    <source>
        <dbReference type="Proteomes" id="UP000000803"/>
    </source>
</evidence>
<organism evidence="8">
    <name type="scientific">Drosophila melanogaster</name>
    <name type="common">Fruit fly</name>
    <dbReference type="NCBI Taxonomy" id="7227"/>
    <lineage>
        <taxon>Eukaryota</taxon>
        <taxon>Metazoa</taxon>
        <taxon>Ecdysozoa</taxon>
        <taxon>Arthropoda</taxon>
        <taxon>Hexapoda</taxon>
        <taxon>Insecta</taxon>
        <taxon>Pterygota</taxon>
        <taxon>Neoptera</taxon>
        <taxon>Endopterygota</taxon>
        <taxon>Diptera</taxon>
        <taxon>Brachycera</taxon>
        <taxon>Muscomorpha</taxon>
        <taxon>Ephydroidea</taxon>
        <taxon>Drosophilidae</taxon>
        <taxon>Drosophila</taxon>
        <taxon>Sophophora</taxon>
    </lineage>
</organism>
<dbReference type="EMBL" id="AE014297">
    <property type="protein sequence ID" value="AAF56953.3"/>
    <property type="molecule type" value="Genomic_DNA"/>
</dbReference>
<dbReference type="EMBL" id="AE014297">
    <property type="protein sequence ID" value="ACZ95065.1"/>
    <property type="molecule type" value="Genomic_DNA"/>
</dbReference>
<dbReference type="EMBL" id="AE014297">
    <property type="protein sequence ID" value="AHN57593.1"/>
    <property type="molecule type" value="Genomic_DNA"/>
</dbReference>
<dbReference type="EMBL" id="AY113253">
    <property type="protein sequence ID" value="AAM29258.1"/>
    <property type="status" value="ALT_INIT"/>
    <property type="molecule type" value="mRNA"/>
</dbReference>
<dbReference type="EMBL" id="BT126145">
    <property type="protein sequence ID" value="ADZ74172.1"/>
    <property type="status" value="ALT_INIT"/>
    <property type="molecule type" value="mRNA"/>
</dbReference>
<dbReference type="RefSeq" id="NP_001163771.1">
    <molecule id="Q9VAF7-2"/>
    <property type="nucleotide sequence ID" value="NM_001170300.2"/>
</dbReference>
<dbReference type="RefSeq" id="NP_001287594.1">
    <molecule id="Q9VAF7-1"/>
    <property type="nucleotide sequence ID" value="NM_001300665.1"/>
</dbReference>
<dbReference type="RefSeq" id="NP_651735.3">
    <molecule id="Q9VAF7-1"/>
    <property type="nucleotide sequence ID" value="NM_143478.3"/>
</dbReference>
<dbReference type="FunCoup" id="Q9VAF7">
    <property type="interactions" value="166"/>
</dbReference>
<dbReference type="IntAct" id="Q9VAF7">
    <property type="interactions" value="1"/>
</dbReference>
<dbReference type="STRING" id="7227.FBpp0290959"/>
<dbReference type="PaxDb" id="7227-FBpp0290959"/>
<dbReference type="DNASU" id="43526"/>
<dbReference type="EnsemblMetazoa" id="FBtr0301745">
    <molecule id="Q9VAF7-1"/>
    <property type="protein sequence ID" value="FBpp0290959"/>
    <property type="gene ID" value="FBgn0039707"/>
</dbReference>
<dbReference type="EnsemblMetazoa" id="FBtr0301746">
    <molecule id="Q9VAF7-2"/>
    <property type="protein sequence ID" value="FBpp0290960"/>
    <property type="gene ID" value="FBgn0039707"/>
</dbReference>
<dbReference type="EnsemblMetazoa" id="FBtr0339143">
    <molecule id="Q9VAF7-1"/>
    <property type="protein sequence ID" value="FBpp0308288"/>
    <property type="gene ID" value="FBgn0039707"/>
</dbReference>
<dbReference type="GeneID" id="43526"/>
<dbReference type="KEGG" id="dme:Dmel_CG15510"/>
<dbReference type="UCSC" id="CG15510-RA">
    <molecule id="Q9VAF7-1"/>
    <property type="organism name" value="d. melanogaster"/>
</dbReference>
<dbReference type="AGR" id="FB:FBgn0039707"/>
<dbReference type="CTD" id="43526"/>
<dbReference type="FlyBase" id="FBgn0039707">
    <property type="gene designation" value="Prtl99C"/>
</dbReference>
<dbReference type="VEuPathDB" id="VectorBase:FBgn0039707"/>
<dbReference type="InParanoid" id="Q9VAF7"/>
<dbReference type="OMA" id="ESHRHAF"/>
<dbReference type="OrthoDB" id="7871070at2759"/>
<dbReference type="PhylomeDB" id="Q9VAF7"/>
<dbReference type="BioGRID-ORCS" id="43526">
    <property type="hits" value="0 hits in 1 CRISPR screen"/>
</dbReference>
<dbReference type="GenomeRNAi" id="43526"/>
<dbReference type="PRO" id="PR:Q9VAF7"/>
<dbReference type="Proteomes" id="UP000000803">
    <property type="component" value="Chromosome 3R"/>
</dbReference>
<dbReference type="Bgee" id="FBgn0039707">
    <property type="expression patterns" value="Expressed in early elongation stage spermatid (Drosophila) in testis and 27 other cell types or tissues"/>
</dbReference>
<dbReference type="ExpressionAtlas" id="Q9VAF7">
    <property type="expression patterns" value="baseline and differential"/>
</dbReference>
<dbReference type="GO" id="GO:0005694">
    <property type="term" value="C:chromosome"/>
    <property type="evidence" value="ECO:0007669"/>
    <property type="project" value="UniProtKB-SubCell"/>
</dbReference>
<dbReference type="GO" id="GO:0005634">
    <property type="term" value="C:nucleus"/>
    <property type="evidence" value="ECO:0000314"/>
    <property type="project" value="FlyBase"/>
</dbReference>
<dbReference type="GO" id="GO:0003677">
    <property type="term" value="F:DNA binding"/>
    <property type="evidence" value="ECO:0007669"/>
    <property type="project" value="UniProtKB-KW"/>
</dbReference>
<dbReference type="GO" id="GO:0030261">
    <property type="term" value="P:chromosome condensation"/>
    <property type="evidence" value="ECO:0007669"/>
    <property type="project" value="UniProtKB-KW"/>
</dbReference>
<dbReference type="GO" id="GO:0035092">
    <property type="term" value="P:sperm DNA condensation"/>
    <property type="evidence" value="ECO:0000315"/>
    <property type="project" value="FlyBase"/>
</dbReference>
<dbReference type="InterPro" id="IPR036910">
    <property type="entry name" value="HMG_box_dom_sf"/>
</dbReference>
<dbReference type="InterPro" id="IPR024460">
    <property type="entry name" value="Protamine-like"/>
</dbReference>
<dbReference type="Pfam" id="PF06382">
    <property type="entry name" value="Protamine_like"/>
    <property type="match status" value="2"/>
</dbReference>
<dbReference type="SUPFAM" id="SSF47095">
    <property type="entry name" value="HMG-box"/>
    <property type="match status" value="1"/>
</dbReference>
<keyword id="KW-0025">Alternative splicing</keyword>
<keyword id="KW-0158">Chromosome</keyword>
<keyword id="KW-0221">Differentiation</keyword>
<keyword id="KW-0226">DNA condensation</keyword>
<keyword id="KW-0238">DNA-binding</keyword>
<keyword id="KW-0539">Nucleus</keyword>
<keyword id="KW-1185">Reference proteome</keyword>
<keyword id="KW-0744">Spermatogenesis</keyword>
<comment type="function">
    <text evidence="2">Regulates chromatin compaction in spermatid nuclei and is essential for male fertility. Functions in parallel with other chromatin-condensing proteins such as ProtA, ProtB and Mst77F.</text>
</comment>
<comment type="subcellular location">
    <subcellularLocation>
        <location evidence="2">Nucleus</location>
    </subcellularLocation>
    <subcellularLocation>
        <location evidence="2">Chromosome</location>
    </subcellularLocation>
    <text evidence="2">Expressed in mature sperm chromatin.</text>
</comment>
<comment type="alternative products">
    <event type="alternative splicing"/>
    <isoform>
        <id>Q9VAF7-1</id>
        <name evidence="7">B</name>
        <name evidence="7">D</name>
        <sequence type="displayed"/>
    </isoform>
    <isoform>
        <id>Q9VAF7-2</id>
        <name evidence="7">C</name>
        <sequence type="described" ref="VSP_058761"/>
    </isoform>
</comment>
<comment type="developmental stage">
    <text evidence="2">Expressed in larva and adult male. Expression in the sperm nucleus begins between the early and late canoe stages before the protamines appear. Highly expressed from early spermatocyte to late spermatid and persists in mature sperm.</text>
</comment>
<comment type="domain">
    <text evidence="2">The C-terminal part (169-201) is essential for male fertility and correct chromatin compaction in mature sperm.</text>
</comment>
<comment type="disruption phenotype">
    <text evidence="2">RNAi-mediated knockdown in late spermatogonia to early spermatocytes affects spermiogenesis and results in reduced male fertility. Sperm nuclei are long and needle-shaped due to the elongation of their chromatin region. No effect on the replacement of histones by protamines in the chromatin of sperm during the haploid phase of spermatogenesis.</text>
</comment>
<comment type="similarity">
    <text evidence="4">Belongs to the UPF0771 family.</text>
</comment>
<comment type="sequence caution" evidence="4">
    <conflict type="erroneous initiation">
        <sequence resource="EMBL-CDS" id="AAM29258"/>
    </conflict>
    <text>Extended N-terminus.</text>
</comment>
<comment type="sequence caution" evidence="4">
    <conflict type="erroneous initiation">
        <sequence resource="EMBL-CDS" id="ADZ74172"/>
    </conflict>
    <text>Extended N-terminus.</text>
</comment>
<feature type="chain" id="PRO_0000438920" description="Protamine-like protein 99C">
    <location>
        <begin position="1"/>
        <end position="201"/>
    </location>
</feature>
<feature type="region of interest" description="Disordered" evidence="1">
    <location>
        <begin position="93"/>
        <end position="143"/>
    </location>
</feature>
<feature type="compositionally biased region" description="Polar residues" evidence="1">
    <location>
        <begin position="94"/>
        <end position="104"/>
    </location>
</feature>
<feature type="compositionally biased region" description="Basic residues" evidence="1">
    <location>
        <begin position="125"/>
        <end position="143"/>
    </location>
</feature>
<feature type="splice variant" id="VSP_058761" description="In isoform C." evidence="4">
    <location>
        <begin position="70"/>
        <end position="77"/>
    </location>
</feature>
<feature type="sequence conflict" description="In Ref. 4; ADZ74172." evidence="4" ref="4">
    <original>R</original>
    <variation>P</variation>
    <location>
        <position position="166"/>
    </location>
</feature>